<proteinExistence type="evidence at transcript level"/>
<evidence type="ECO:0000250" key="1"/>
<evidence type="ECO:0000256" key="2">
    <source>
        <dbReference type="SAM" id="MobiDB-lite"/>
    </source>
</evidence>
<evidence type="ECO:0000305" key="3"/>
<reference key="1">
    <citation type="journal article" date="1996" name="Mol. Biochem. Parasitol.">
        <title>Cloning of a ribosomal phosphoprotein P0 gene homologue from Plasmodium falciparum.</title>
        <authorList>
            <person name="Goswami A."/>
            <person name="Chatterjee S."/>
            <person name="Sharma S."/>
        </authorList>
    </citation>
    <scope>NUCLEOTIDE SEQUENCE [MRNA]</scope>
</reference>
<reference key="2">
    <citation type="submission" date="1999-01" db="EMBL/GenBank/DDBJ databases">
        <authorList>
            <person name="Sharma S."/>
        </authorList>
    </citation>
    <scope>SEQUENCE REVISION</scope>
</reference>
<sequence>MAKLSKQQKKQMYIEKLSSLIQQYSKILIVHVDNVGSNQMASVRKSLRGKATILMGKNTRIRTALKKNLQAVPQIEKLLPLVKLNMGFVFCKDDLSEIRNIILDNKSSSHPARLGVIAPIDVFIPPGPTGMDPSHTSFLESLGISTKIVKGQIEIQEHVHLIKQGEKVTASSATLLRKFNMNPSYGVDVRTVYDDGVIYDAKVLDITDEDILEKFSKGVSNVAALSRATGVITEASYPHVFVEAFKNIVALIIDSDYTFPLMKILKKWVENPEAFAAVAAPASAAKADEPKKEEAKKVEEEEEEEEDGFMGFGMFD</sequence>
<gene>
    <name type="primary">RPLP0</name>
</gene>
<organism>
    <name type="scientific">Plasmodium falciparum (isolate 7G8)</name>
    <dbReference type="NCBI Taxonomy" id="57266"/>
    <lineage>
        <taxon>Eukaryota</taxon>
        <taxon>Sar</taxon>
        <taxon>Alveolata</taxon>
        <taxon>Apicomplexa</taxon>
        <taxon>Aconoidasida</taxon>
        <taxon>Haemosporida</taxon>
        <taxon>Plasmodiidae</taxon>
        <taxon>Plasmodium</taxon>
        <taxon>Plasmodium (Laverania)</taxon>
    </lineage>
</organism>
<accession>Q94660</accession>
<name>RLA0_PLAF8</name>
<protein>
    <recommendedName>
        <fullName evidence="3">Large ribosomal subunit protein uL10</fullName>
    </recommendedName>
    <alternativeName>
        <fullName>60S acidic ribosomal protein P0</fullName>
    </alternativeName>
</protein>
<keyword id="KW-0597">Phosphoprotein</keyword>
<keyword id="KW-0687">Ribonucleoprotein</keyword>
<keyword id="KW-0689">Ribosomal protein</keyword>
<dbReference type="EMBL" id="U56663">
    <property type="protein sequence ID" value="AAD10140.1"/>
    <property type="molecule type" value="mRNA"/>
</dbReference>
<dbReference type="SMR" id="Q94660"/>
<dbReference type="GO" id="GO:0022625">
    <property type="term" value="C:cytosolic large ribosomal subunit"/>
    <property type="evidence" value="ECO:0007669"/>
    <property type="project" value="TreeGrafter"/>
</dbReference>
<dbReference type="GO" id="GO:0070180">
    <property type="term" value="F:large ribosomal subunit rRNA binding"/>
    <property type="evidence" value="ECO:0007669"/>
    <property type="project" value="TreeGrafter"/>
</dbReference>
<dbReference type="GO" id="GO:0003735">
    <property type="term" value="F:structural constituent of ribosome"/>
    <property type="evidence" value="ECO:0007669"/>
    <property type="project" value="TreeGrafter"/>
</dbReference>
<dbReference type="GO" id="GO:0002181">
    <property type="term" value="P:cytoplasmic translation"/>
    <property type="evidence" value="ECO:0007669"/>
    <property type="project" value="TreeGrafter"/>
</dbReference>
<dbReference type="GO" id="GO:0000027">
    <property type="term" value="P:ribosomal large subunit assembly"/>
    <property type="evidence" value="ECO:0007669"/>
    <property type="project" value="TreeGrafter"/>
</dbReference>
<dbReference type="CDD" id="cd05795">
    <property type="entry name" value="Ribosomal_P0_L10e"/>
    <property type="match status" value="1"/>
</dbReference>
<dbReference type="FunFam" id="3.90.105.20:FF:000001">
    <property type="entry name" value="60S acidic ribosomal protein P0"/>
    <property type="match status" value="1"/>
</dbReference>
<dbReference type="Gene3D" id="3.30.70.1730">
    <property type="match status" value="1"/>
</dbReference>
<dbReference type="Gene3D" id="3.90.105.20">
    <property type="match status" value="1"/>
</dbReference>
<dbReference type="InterPro" id="IPR050323">
    <property type="entry name" value="Ribosomal_protein_uL10"/>
</dbReference>
<dbReference type="InterPro" id="IPR001790">
    <property type="entry name" value="Ribosomal_uL10"/>
</dbReference>
<dbReference type="InterPro" id="IPR040637">
    <property type="entry name" value="Ribosomal_uL10-like_insert"/>
</dbReference>
<dbReference type="InterPro" id="IPR043164">
    <property type="entry name" value="Ribosomal_uL10-like_insert_sf"/>
</dbReference>
<dbReference type="InterPro" id="IPR043141">
    <property type="entry name" value="Ribosomal_uL10-like_sf"/>
</dbReference>
<dbReference type="InterPro" id="IPR030670">
    <property type="entry name" value="uL10_eukaryotes"/>
</dbReference>
<dbReference type="PANTHER" id="PTHR45699">
    <property type="entry name" value="60S ACIDIC RIBOSOMAL PROTEIN P0"/>
    <property type="match status" value="1"/>
</dbReference>
<dbReference type="PANTHER" id="PTHR45699:SF3">
    <property type="entry name" value="LARGE RIBOSOMAL SUBUNIT PROTEIN UL10"/>
    <property type="match status" value="1"/>
</dbReference>
<dbReference type="Pfam" id="PF00428">
    <property type="entry name" value="Ribosomal_60s"/>
    <property type="match status" value="1"/>
</dbReference>
<dbReference type="Pfam" id="PF00466">
    <property type="entry name" value="Ribosomal_L10"/>
    <property type="match status" value="1"/>
</dbReference>
<dbReference type="Pfam" id="PF17777">
    <property type="entry name" value="RL10P_insert"/>
    <property type="match status" value="1"/>
</dbReference>
<dbReference type="PIRSF" id="PIRSF039087">
    <property type="entry name" value="L10E"/>
    <property type="match status" value="1"/>
</dbReference>
<dbReference type="SUPFAM" id="SSF160369">
    <property type="entry name" value="Ribosomal protein L10-like"/>
    <property type="match status" value="1"/>
</dbReference>
<feature type="chain" id="PRO_0000154773" description="Large ribosomal subunit protein uL10">
    <location>
        <begin position="1"/>
        <end position="316"/>
    </location>
</feature>
<feature type="region of interest" description="Disordered" evidence="2">
    <location>
        <begin position="282"/>
        <end position="316"/>
    </location>
</feature>
<feature type="compositionally biased region" description="Basic and acidic residues" evidence="2">
    <location>
        <begin position="286"/>
        <end position="299"/>
    </location>
</feature>
<comment type="function">
    <text>Ribosomal protein P0 is the functional equivalent of E.coli protein L10.</text>
</comment>
<comment type="subunit">
    <text evidence="1">P0 forms a pentameric complex by interaction with dimers of P1 and P2.</text>
</comment>
<comment type="PTM">
    <text evidence="1">Phosphorylated.</text>
</comment>
<comment type="similarity">
    <text evidence="3">Belongs to the universal ribosomal protein uL10 family.</text>
</comment>